<dbReference type="EMBL" id="CP000552">
    <property type="protein sequence ID" value="ABM71347.1"/>
    <property type="molecule type" value="Genomic_DNA"/>
</dbReference>
<dbReference type="RefSeq" id="WP_011819462.1">
    <property type="nucleotide sequence ID" value="NC_008817.1"/>
</dbReference>
<dbReference type="STRING" id="167542.P9515_01381"/>
<dbReference type="GeneID" id="60201250"/>
<dbReference type="KEGG" id="pmc:P9515_01381"/>
<dbReference type="eggNOG" id="ENOG5032YB3">
    <property type="taxonomic scope" value="Bacteria"/>
</dbReference>
<dbReference type="HOGENOM" id="CLU_180777_1_0_3"/>
<dbReference type="OrthoDB" id="516864at2"/>
<dbReference type="Proteomes" id="UP000001589">
    <property type="component" value="Chromosome"/>
</dbReference>
<dbReference type="HAMAP" id="MF_01360">
    <property type="entry name" value="UPF0367"/>
    <property type="match status" value="1"/>
</dbReference>
<dbReference type="InterPro" id="IPR020885">
    <property type="entry name" value="UPF0367"/>
</dbReference>
<dbReference type="NCBIfam" id="NF010236">
    <property type="entry name" value="PRK13683.1"/>
    <property type="match status" value="1"/>
</dbReference>
<name>Y138_PROM5</name>
<accession>A2BU86</accession>
<reference key="1">
    <citation type="journal article" date="2007" name="PLoS Genet.">
        <title>Patterns and implications of gene gain and loss in the evolution of Prochlorococcus.</title>
        <authorList>
            <person name="Kettler G.C."/>
            <person name="Martiny A.C."/>
            <person name="Huang K."/>
            <person name="Zucker J."/>
            <person name="Coleman M.L."/>
            <person name="Rodrigue S."/>
            <person name="Chen F."/>
            <person name="Lapidus A."/>
            <person name="Ferriera S."/>
            <person name="Johnson J."/>
            <person name="Steglich C."/>
            <person name="Church G.M."/>
            <person name="Richardson P."/>
            <person name="Chisholm S.W."/>
        </authorList>
    </citation>
    <scope>NUCLEOTIDE SEQUENCE [LARGE SCALE GENOMIC DNA]</scope>
    <source>
        <strain>MIT 9515</strain>
    </source>
</reference>
<comment type="similarity">
    <text evidence="1">Belongs to the UPF0367 family.</text>
</comment>
<protein>
    <recommendedName>
        <fullName evidence="1">UPF0367 protein P9515_01381</fullName>
    </recommendedName>
</protein>
<evidence type="ECO:0000255" key="1">
    <source>
        <dbReference type="HAMAP-Rule" id="MF_01360"/>
    </source>
</evidence>
<feature type="chain" id="PRO_1000067776" description="UPF0367 protein P9515_01381">
    <location>
        <begin position="1"/>
        <end position="89"/>
    </location>
</feature>
<sequence>MYSLEISLRYSPFPLSIQKKDYEDVKRIYDEIKDFMQGKNTNSDLIEISCEKVQDKLITVLAKEVISVQIYEKSSVAGGSKRPGFSLDI</sequence>
<proteinExistence type="inferred from homology"/>
<gene>
    <name type="ordered locus">P9515_01381</name>
</gene>
<organism>
    <name type="scientific">Prochlorococcus marinus (strain MIT 9515)</name>
    <dbReference type="NCBI Taxonomy" id="167542"/>
    <lineage>
        <taxon>Bacteria</taxon>
        <taxon>Bacillati</taxon>
        <taxon>Cyanobacteriota</taxon>
        <taxon>Cyanophyceae</taxon>
        <taxon>Synechococcales</taxon>
        <taxon>Prochlorococcaceae</taxon>
        <taxon>Prochlorococcus</taxon>
    </lineage>
</organism>